<protein>
    <recommendedName>
        <fullName evidence="1">Large ribosomal subunit protein bL35</fullName>
    </recommendedName>
    <alternativeName>
        <fullName evidence="3">50S ribosomal protein L35</fullName>
    </alternativeName>
</protein>
<dbReference type="EMBL" id="CP000946">
    <property type="protein sequence ID" value="ACA77561.1"/>
    <property type="molecule type" value="Genomic_DNA"/>
</dbReference>
<dbReference type="RefSeq" id="WP_001124225.1">
    <property type="nucleotide sequence ID" value="NZ_MTFT01000006.1"/>
</dbReference>
<dbReference type="SMR" id="B1IPL1"/>
<dbReference type="GeneID" id="97601348"/>
<dbReference type="KEGG" id="ecl:EcolC_1915"/>
<dbReference type="HOGENOM" id="CLU_169643_1_1_6"/>
<dbReference type="GO" id="GO:0022625">
    <property type="term" value="C:cytosolic large ribosomal subunit"/>
    <property type="evidence" value="ECO:0007669"/>
    <property type="project" value="TreeGrafter"/>
</dbReference>
<dbReference type="GO" id="GO:0003735">
    <property type="term" value="F:structural constituent of ribosome"/>
    <property type="evidence" value="ECO:0007669"/>
    <property type="project" value="InterPro"/>
</dbReference>
<dbReference type="GO" id="GO:0006412">
    <property type="term" value="P:translation"/>
    <property type="evidence" value="ECO:0007669"/>
    <property type="project" value="UniProtKB-UniRule"/>
</dbReference>
<dbReference type="FunFam" id="4.10.410.60:FF:000001">
    <property type="entry name" value="50S ribosomal protein L35"/>
    <property type="match status" value="1"/>
</dbReference>
<dbReference type="Gene3D" id="4.10.410.60">
    <property type="match status" value="1"/>
</dbReference>
<dbReference type="HAMAP" id="MF_00514">
    <property type="entry name" value="Ribosomal_bL35"/>
    <property type="match status" value="1"/>
</dbReference>
<dbReference type="InterPro" id="IPR001706">
    <property type="entry name" value="Ribosomal_bL35"/>
</dbReference>
<dbReference type="InterPro" id="IPR021137">
    <property type="entry name" value="Ribosomal_bL35-like"/>
</dbReference>
<dbReference type="InterPro" id="IPR018265">
    <property type="entry name" value="Ribosomal_bL35_CS"/>
</dbReference>
<dbReference type="InterPro" id="IPR037229">
    <property type="entry name" value="Ribosomal_bL35_sf"/>
</dbReference>
<dbReference type="NCBIfam" id="TIGR00001">
    <property type="entry name" value="rpmI_bact"/>
    <property type="match status" value="1"/>
</dbReference>
<dbReference type="PANTHER" id="PTHR33343">
    <property type="entry name" value="54S RIBOSOMAL PROTEIN BL35M"/>
    <property type="match status" value="1"/>
</dbReference>
<dbReference type="PANTHER" id="PTHR33343:SF1">
    <property type="entry name" value="LARGE RIBOSOMAL SUBUNIT PROTEIN BL35M"/>
    <property type="match status" value="1"/>
</dbReference>
<dbReference type="Pfam" id="PF01632">
    <property type="entry name" value="Ribosomal_L35p"/>
    <property type="match status" value="1"/>
</dbReference>
<dbReference type="PRINTS" id="PR00064">
    <property type="entry name" value="RIBOSOMALL35"/>
</dbReference>
<dbReference type="SUPFAM" id="SSF143034">
    <property type="entry name" value="L35p-like"/>
    <property type="match status" value="1"/>
</dbReference>
<dbReference type="PROSITE" id="PS00936">
    <property type="entry name" value="RIBOSOMAL_L35"/>
    <property type="match status" value="1"/>
</dbReference>
<reference key="1">
    <citation type="submission" date="2008-02" db="EMBL/GenBank/DDBJ databases">
        <title>Complete sequence of Escherichia coli C str. ATCC 8739.</title>
        <authorList>
            <person name="Copeland A."/>
            <person name="Lucas S."/>
            <person name="Lapidus A."/>
            <person name="Glavina del Rio T."/>
            <person name="Dalin E."/>
            <person name="Tice H."/>
            <person name="Bruce D."/>
            <person name="Goodwin L."/>
            <person name="Pitluck S."/>
            <person name="Kiss H."/>
            <person name="Brettin T."/>
            <person name="Detter J.C."/>
            <person name="Han C."/>
            <person name="Kuske C.R."/>
            <person name="Schmutz J."/>
            <person name="Larimer F."/>
            <person name="Land M."/>
            <person name="Hauser L."/>
            <person name="Kyrpides N."/>
            <person name="Mikhailova N."/>
            <person name="Ingram L."/>
            <person name="Richardson P."/>
        </authorList>
    </citation>
    <scope>NUCLEOTIDE SEQUENCE [LARGE SCALE GENOMIC DNA]</scope>
    <source>
        <strain>ATCC 8739 / DSM 1576 / NBRC 3972 / NCIMB 8545 / WDCM 00012 / Crooks</strain>
    </source>
</reference>
<proteinExistence type="inferred from homology"/>
<gene>
    <name evidence="1" type="primary">rpmI</name>
    <name type="ordered locus">EcolC_1915</name>
</gene>
<sequence length="65" mass="7289">MPKIKTVRGAAKRFKKTGKGGFKHKHANLRHILTKKATKRKRHLRPKAMVSKGDLGLVIACLPYA</sequence>
<keyword id="KW-0687">Ribonucleoprotein</keyword>
<keyword id="KW-0689">Ribosomal protein</keyword>
<feature type="chain" id="PRO_1000081608" description="Large ribosomal subunit protein bL35">
    <location>
        <begin position="1"/>
        <end position="65"/>
    </location>
</feature>
<feature type="region of interest" description="Disordered" evidence="2">
    <location>
        <begin position="1"/>
        <end position="22"/>
    </location>
</feature>
<feature type="compositionally biased region" description="Basic residues" evidence="2">
    <location>
        <begin position="10"/>
        <end position="22"/>
    </location>
</feature>
<accession>B1IPL1</accession>
<organism>
    <name type="scientific">Escherichia coli (strain ATCC 8739 / DSM 1576 / NBRC 3972 / NCIMB 8545 / WDCM 00012 / Crooks)</name>
    <dbReference type="NCBI Taxonomy" id="481805"/>
    <lineage>
        <taxon>Bacteria</taxon>
        <taxon>Pseudomonadati</taxon>
        <taxon>Pseudomonadota</taxon>
        <taxon>Gammaproteobacteria</taxon>
        <taxon>Enterobacterales</taxon>
        <taxon>Enterobacteriaceae</taxon>
        <taxon>Escherichia</taxon>
    </lineage>
</organism>
<name>RL35_ECOLC</name>
<evidence type="ECO:0000255" key="1">
    <source>
        <dbReference type="HAMAP-Rule" id="MF_00514"/>
    </source>
</evidence>
<evidence type="ECO:0000256" key="2">
    <source>
        <dbReference type="SAM" id="MobiDB-lite"/>
    </source>
</evidence>
<evidence type="ECO:0000305" key="3"/>
<comment type="similarity">
    <text evidence="1">Belongs to the bacterial ribosomal protein bL35 family.</text>
</comment>